<name>F16PA_PARDP</name>
<reference key="1">
    <citation type="submission" date="2006-12" db="EMBL/GenBank/DDBJ databases">
        <title>Complete sequence of chromosome 1 of Paracoccus denitrificans PD1222.</title>
        <authorList>
            <person name="Copeland A."/>
            <person name="Lucas S."/>
            <person name="Lapidus A."/>
            <person name="Barry K."/>
            <person name="Detter J.C."/>
            <person name="Glavina del Rio T."/>
            <person name="Hammon N."/>
            <person name="Israni S."/>
            <person name="Dalin E."/>
            <person name="Tice H."/>
            <person name="Pitluck S."/>
            <person name="Munk A.C."/>
            <person name="Brettin T."/>
            <person name="Bruce D."/>
            <person name="Han C."/>
            <person name="Tapia R."/>
            <person name="Gilna P."/>
            <person name="Schmutz J."/>
            <person name="Larimer F."/>
            <person name="Land M."/>
            <person name="Hauser L."/>
            <person name="Kyrpides N."/>
            <person name="Lykidis A."/>
            <person name="Spiro S."/>
            <person name="Richardson D.J."/>
            <person name="Moir J.W.B."/>
            <person name="Ferguson S.J."/>
            <person name="van Spanning R.J.M."/>
            <person name="Richardson P."/>
        </authorList>
    </citation>
    <scope>NUCLEOTIDE SEQUENCE [LARGE SCALE GENOMIC DNA]</scope>
    <source>
        <strain>Pd 1222</strain>
    </source>
</reference>
<comment type="catalytic activity">
    <reaction evidence="1">
        <text>beta-D-fructose 1,6-bisphosphate + H2O = beta-D-fructose 6-phosphate + phosphate</text>
        <dbReference type="Rhea" id="RHEA:11064"/>
        <dbReference type="ChEBI" id="CHEBI:15377"/>
        <dbReference type="ChEBI" id="CHEBI:32966"/>
        <dbReference type="ChEBI" id="CHEBI:43474"/>
        <dbReference type="ChEBI" id="CHEBI:57634"/>
        <dbReference type="EC" id="3.1.3.11"/>
    </reaction>
</comment>
<comment type="cofactor">
    <cofactor evidence="1">
        <name>Mg(2+)</name>
        <dbReference type="ChEBI" id="CHEBI:18420"/>
    </cofactor>
    <text evidence="1">Binds 2 magnesium ions per subunit.</text>
</comment>
<comment type="pathway">
    <text evidence="1">Carbohydrate biosynthesis; gluconeogenesis.</text>
</comment>
<comment type="subunit">
    <text evidence="1">Homotetramer.</text>
</comment>
<comment type="subcellular location">
    <subcellularLocation>
        <location evidence="1">Cytoplasm</location>
    </subcellularLocation>
</comment>
<comment type="similarity">
    <text evidence="1">Belongs to the FBPase class 1 family.</text>
</comment>
<gene>
    <name evidence="1" type="primary">fbp</name>
    <name type="ordered locus">Pden_1695</name>
</gene>
<feature type="chain" id="PRO_0000364619" description="Fructose-1,6-bisphosphatase class 1">
    <location>
        <begin position="1"/>
        <end position="330"/>
    </location>
</feature>
<feature type="binding site" evidence="1">
    <location>
        <position position="78"/>
    </location>
    <ligand>
        <name>Mg(2+)</name>
        <dbReference type="ChEBI" id="CHEBI:18420"/>
        <label>1</label>
    </ligand>
</feature>
<feature type="binding site" evidence="1">
    <location>
        <position position="97"/>
    </location>
    <ligand>
        <name>Mg(2+)</name>
        <dbReference type="ChEBI" id="CHEBI:18420"/>
        <label>1</label>
    </ligand>
</feature>
<feature type="binding site" evidence="1">
    <location>
        <position position="97"/>
    </location>
    <ligand>
        <name>Mg(2+)</name>
        <dbReference type="ChEBI" id="CHEBI:18420"/>
        <label>2</label>
    </ligand>
</feature>
<feature type="binding site" evidence="1">
    <location>
        <position position="99"/>
    </location>
    <ligand>
        <name>Mg(2+)</name>
        <dbReference type="ChEBI" id="CHEBI:18420"/>
        <label>1</label>
    </ligand>
</feature>
<feature type="binding site" evidence="1">
    <location>
        <begin position="100"/>
        <end position="103"/>
    </location>
    <ligand>
        <name>substrate</name>
    </ligand>
</feature>
<feature type="binding site" evidence="1">
    <location>
        <position position="100"/>
    </location>
    <ligand>
        <name>Mg(2+)</name>
        <dbReference type="ChEBI" id="CHEBI:18420"/>
        <label>2</label>
    </ligand>
</feature>
<feature type="binding site" evidence="1">
    <location>
        <position position="188"/>
    </location>
    <ligand>
        <name>substrate</name>
    </ligand>
</feature>
<feature type="binding site" evidence="1">
    <location>
        <position position="260"/>
    </location>
    <ligand>
        <name>Mg(2+)</name>
        <dbReference type="ChEBI" id="CHEBI:18420"/>
        <label>2</label>
    </ligand>
</feature>
<keyword id="KW-0119">Carbohydrate metabolism</keyword>
<keyword id="KW-0963">Cytoplasm</keyword>
<keyword id="KW-0378">Hydrolase</keyword>
<keyword id="KW-0460">Magnesium</keyword>
<keyword id="KW-0479">Metal-binding</keyword>
<keyword id="KW-1185">Reference proteome</keyword>
<accession>A1B2P8</accession>
<proteinExistence type="inferred from homology"/>
<organism>
    <name type="scientific">Paracoccus denitrificans (strain Pd 1222)</name>
    <dbReference type="NCBI Taxonomy" id="318586"/>
    <lineage>
        <taxon>Bacteria</taxon>
        <taxon>Pseudomonadati</taxon>
        <taxon>Pseudomonadota</taxon>
        <taxon>Alphaproteobacteria</taxon>
        <taxon>Rhodobacterales</taxon>
        <taxon>Paracoccaceae</taxon>
        <taxon>Paracoccus</taxon>
    </lineage>
</organism>
<protein>
    <recommendedName>
        <fullName evidence="1">Fructose-1,6-bisphosphatase class 1</fullName>
        <shortName evidence="1">FBPase class 1</shortName>
        <ecNumber evidence="1">3.1.3.11</ecNumber>
    </recommendedName>
    <alternativeName>
        <fullName evidence="1">D-fructose-1,6-bisphosphate 1-phosphohydrolase class 1</fullName>
    </alternativeName>
</protein>
<evidence type="ECO:0000255" key="1">
    <source>
        <dbReference type="HAMAP-Rule" id="MF_01855"/>
    </source>
</evidence>
<sequence length="330" mass="35781">MTAETIQTDRIPPHLRPAMQALAEAGARLAAIIRRGGDLAQPVGTNADGDGQKALDVIADDLFCQTLAGAGVRWLASEEQEQAVALDPEGTLAVAIDPLDGSSNIDTNVSIGTIFSIYPAEATAEASFLRPARQQIGAGYIIYGPRCAMMVTFGDGVQHYALDPEDDAFRLVATRRQMPDCALEFAINASNYRHWPQPIRAYIDDCLAGSDGPREQNFNMRWIASLVAETHRILVRGGVFLYPSDARKGYEHGRLRMLYECAPIAFLIEQAGGGATDGRTAILEQGAPTLHQRTPFVFGSAEKVARIAAYHELPETEVSALFGHRGLFRA</sequence>
<dbReference type="EC" id="3.1.3.11" evidence="1"/>
<dbReference type="EMBL" id="CP000489">
    <property type="protein sequence ID" value="ABL69792.1"/>
    <property type="molecule type" value="Genomic_DNA"/>
</dbReference>
<dbReference type="RefSeq" id="WP_011747990.1">
    <property type="nucleotide sequence ID" value="NC_008686.1"/>
</dbReference>
<dbReference type="SMR" id="A1B2P8"/>
<dbReference type="STRING" id="318586.Pden_1695"/>
<dbReference type="EnsemblBacteria" id="ABL69792">
    <property type="protein sequence ID" value="ABL69792"/>
    <property type="gene ID" value="Pden_1695"/>
</dbReference>
<dbReference type="KEGG" id="pde:Pden_1695"/>
<dbReference type="eggNOG" id="COG0158">
    <property type="taxonomic scope" value="Bacteria"/>
</dbReference>
<dbReference type="HOGENOM" id="CLU_039977_0_0_5"/>
<dbReference type="OrthoDB" id="9806756at2"/>
<dbReference type="UniPathway" id="UPA00138"/>
<dbReference type="Proteomes" id="UP000000361">
    <property type="component" value="Chromosome 1"/>
</dbReference>
<dbReference type="GO" id="GO:0005829">
    <property type="term" value="C:cytosol"/>
    <property type="evidence" value="ECO:0007669"/>
    <property type="project" value="TreeGrafter"/>
</dbReference>
<dbReference type="GO" id="GO:0042132">
    <property type="term" value="F:fructose 1,6-bisphosphate 1-phosphatase activity"/>
    <property type="evidence" value="ECO:0007669"/>
    <property type="project" value="UniProtKB-UniRule"/>
</dbReference>
<dbReference type="GO" id="GO:0000287">
    <property type="term" value="F:magnesium ion binding"/>
    <property type="evidence" value="ECO:0007669"/>
    <property type="project" value="UniProtKB-UniRule"/>
</dbReference>
<dbReference type="GO" id="GO:0030388">
    <property type="term" value="P:fructose 1,6-bisphosphate metabolic process"/>
    <property type="evidence" value="ECO:0007669"/>
    <property type="project" value="TreeGrafter"/>
</dbReference>
<dbReference type="GO" id="GO:0006002">
    <property type="term" value="P:fructose 6-phosphate metabolic process"/>
    <property type="evidence" value="ECO:0007669"/>
    <property type="project" value="TreeGrafter"/>
</dbReference>
<dbReference type="GO" id="GO:0006000">
    <property type="term" value="P:fructose metabolic process"/>
    <property type="evidence" value="ECO:0007669"/>
    <property type="project" value="TreeGrafter"/>
</dbReference>
<dbReference type="GO" id="GO:0006094">
    <property type="term" value="P:gluconeogenesis"/>
    <property type="evidence" value="ECO:0007669"/>
    <property type="project" value="UniProtKB-UniRule"/>
</dbReference>
<dbReference type="GO" id="GO:0005986">
    <property type="term" value="P:sucrose biosynthetic process"/>
    <property type="evidence" value="ECO:0007669"/>
    <property type="project" value="TreeGrafter"/>
</dbReference>
<dbReference type="CDD" id="cd00354">
    <property type="entry name" value="FBPase"/>
    <property type="match status" value="1"/>
</dbReference>
<dbReference type="FunFam" id="3.40.190.80:FF:000011">
    <property type="entry name" value="Fructose-1,6-bisphosphatase class 1"/>
    <property type="match status" value="1"/>
</dbReference>
<dbReference type="Gene3D" id="3.40.190.80">
    <property type="match status" value="1"/>
</dbReference>
<dbReference type="Gene3D" id="3.30.540.10">
    <property type="entry name" value="Fructose-1,6-Bisphosphatase, subunit A, domain 1"/>
    <property type="match status" value="1"/>
</dbReference>
<dbReference type="HAMAP" id="MF_01855">
    <property type="entry name" value="FBPase_class1"/>
    <property type="match status" value="1"/>
</dbReference>
<dbReference type="InterPro" id="IPR044015">
    <property type="entry name" value="FBPase_C_dom"/>
</dbReference>
<dbReference type="InterPro" id="IPR000146">
    <property type="entry name" value="FBPase_class-1"/>
</dbReference>
<dbReference type="InterPro" id="IPR033391">
    <property type="entry name" value="FBPase_N"/>
</dbReference>
<dbReference type="InterPro" id="IPR028343">
    <property type="entry name" value="FBPtase"/>
</dbReference>
<dbReference type="InterPro" id="IPR020548">
    <property type="entry name" value="Fructose_bisphosphatase_AS"/>
</dbReference>
<dbReference type="NCBIfam" id="NF006780">
    <property type="entry name" value="PRK09293.1-4"/>
    <property type="match status" value="1"/>
</dbReference>
<dbReference type="PANTHER" id="PTHR11556">
    <property type="entry name" value="FRUCTOSE-1,6-BISPHOSPHATASE-RELATED"/>
    <property type="match status" value="1"/>
</dbReference>
<dbReference type="PANTHER" id="PTHR11556:SF35">
    <property type="entry name" value="SEDOHEPTULOSE-1,7-BISPHOSPHATASE, CHLOROPLASTIC"/>
    <property type="match status" value="1"/>
</dbReference>
<dbReference type="Pfam" id="PF00316">
    <property type="entry name" value="FBPase"/>
    <property type="match status" value="1"/>
</dbReference>
<dbReference type="Pfam" id="PF18913">
    <property type="entry name" value="FBPase_C"/>
    <property type="match status" value="1"/>
</dbReference>
<dbReference type="PIRSF" id="PIRSF500210">
    <property type="entry name" value="FBPtase"/>
    <property type="match status" value="1"/>
</dbReference>
<dbReference type="PIRSF" id="PIRSF000904">
    <property type="entry name" value="FBPtase_SBPase"/>
    <property type="match status" value="1"/>
</dbReference>
<dbReference type="PRINTS" id="PR00115">
    <property type="entry name" value="F16BPHPHTASE"/>
</dbReference>
<dbReference type="SUPFAM" id="SSF56655">
    <property type="entry name" value="Carbohydrate phosphatase"/>
    <property type="match status" value="1"/>
</dbReference>
<dbReference type="PROSITE" id="PS00124">
    <property type="entry name" value="FBPASE"/>
    <property type="match status" value="1"/>
</dbReference>